<proteinExistence type="evidence at protein level"/>
<accession>E3P6N3</accession>
<keyword id="KW-1015">Disulfide bond</keyword>
<keyword id="KW-0646">Protease inhibitor</keyword>
<keyword id="KW-0964">Secreted</keyword>
<keyword id="KW-0732">Signal</keyword>
<keyword id="KW-0789">Thiol protease inhibitor</keyword>
<organism>
    <name type="scientific">Austrelaps superbus</name>
    <name type="common">Lowland copperhead snake</name>
    <name type="synonym">Hoplocephalus superbus</name>
    <dbReference type="NCBI Taxonomy" id="29156"/>
    <lineage>
        <taxon>Eukaryota</taxon>
        <taxon>Metazoa</taxon>
        <taxon>Chordata</taxon>
        <taxon>Craniata</taxon>
        <taxon>Vertebrata</taxon>
        <taxon>Euteleostomi</taxon>
        <taxon>Lepidosauria</taxon>
        <taxon>Squamata</taxon>
        <taxon>Bifurcata</taxon>
        <taxon>Unidentata</taxon>
        <taxon>Episquamata</taxon>
        <taxon>Toxicofera</taxon>
        <taxon>Serpentes</taxon>
        <taxon>Colubroidea</taxon>
        <taxon>Elapidae</taxon>
        <taxon>Hydrophiinae</taxon>
        <taxon>Austrelaps</taxon>
    </lineage>
</organism>
<sequence length="141" mass="15855">MVHSQLPVAAPLRLLCALLLLPLATMIPGGLSPRSVTDPDVQEAAEFAVQEYNALSANAYYYKQLRIVEAQSQVVTGAKYYLTMELMKTKCAKTTGKPKVYKEIQNCELPPKAQQEKLTCRFQVWSCPWLQKIELTKMSCN</sequence>
<evidence type="ECO:0000250" key="1"/>
<evidence type="ECO:0000250" key="2">
    <source>
        <dbReference type="UniProtKB" id="P01034"/>
    </source>
</evidence>
<evidence type="ECO:0000269" key="3">
    <source>
    </source>
</evidence>
<evidence type="ECO:0000305" key="4"/>
<evidence type="ECO:0000305" key="5">
    <source>
    </source>
</evidence>
<feature type="signal peptide" evidence="1">
    <location>
        <begin position="1"/>
        <end position="26"/>
    </location>
</feature>
<feature type="chain" id="PRO_5000654409" description="AsCystatin">
    <location>
        <begin position="27"/>
        <end position="141"/>
    </location>
</feature>
<feature type="domain" description="Cystatin">
    <location>
        <begin position="29"/>
        <end position="129"/>
    </location>
</feature>
<feature type="short sequence motif" description="Secondary area of contact" evidence="1">
    <location>
        <begin position="73"/>
        <end position="77"/>
    </location>
</feature>
<feature type="site" description="Reactive site" evidence="1">
    <location>
        <position position="29"/>
    </location>
</feature>
<feature type="disulfide bond" evidence="2">
    <location>
        <begin position="91"/>
        <end position="107"/>
    </location>
</feature>
<feature type="disulfide bond" evidence="2">
    <location>
        <begin position="120"/>
        <end position="140"/>
    </location>
</feature>
<feature type="mutagenesis site" description="1000-fold reduction in inhibitory activity tested on papain." evidence="3">
    <original>G</original>
    <variation>S</variation>
    <location>
        <position position="29"/>
    </location>
</feature>
<reference key="1">
    <citation type="journal article" date="2011" name="Biochimie">
        <title>Cloning and characterisation of novel cystatins from elapid snake venom glands.</title>
        <authorList>
            <person name="Richards R."/>
            <person name="St Pierre L."/>
            <person name="Trabi M."/>
            <person name="Johnson L.A."/>
            <person name="de Jersey J."/>
            <person name="Masci P.P."/>
            <person name="Lavin M.F."/>
        </authorList>
    </citation>
    <scope>NUCLEOTIDE SEQUENCE [MRNA]</scope>
    <scope>FUNCTION</scope>
    <scope>LEVEL OF PROTEIN EXPRESSION</scope>
    <scope>3D-STRUCTURE MODELING IN COMPLEX WITH A CYSTEINE PROTEASE</scope>
    <scope>MUTAGENESIS OF GLY-29</scope>
    <source>
        <tissue>Venom</tissue>
        <tissue>Venom gland</tissue>
    </source>
</reference>
<protein>
    <recommendedName>
        <fullName>AsCystatin</fullName>
        <shortName>AsCys</shortName>
        <shortName>Cystatin</shortName>
    </recommendedName>
</protein>
<dbReference type="EMBL" id="FJ411278">
    <property type="protein sequence ID" value="ACR83839.1"/>
    <property type="molecule type" value="mRNA"/>
</dbReference>
<dbReference type="SMR" id="E3P6N3"/>
<dbReference type="MEROPS" id="I25.012"/>
<dbReference type="GO" id="GO:0070062">
    <property type="term" value="C:extracellular exosome"/>
    <property type="evidence" value="ECO:0007669"/>
    <property type="project" value="TreeGrafter"/>
</dbReference>
<dbReference type="GO" id="GO:0004869">
    <property type="term" value="F:cysteine-type endopeptidase inhibitor activity"/>
    <property type="evidence" value="ECO:0007669"/>
    <property type="project" value="UniProtKB-KW"/>
</dbReference>
<dbReference type="CDD" id="cd00042">
    <property type="entry name" value="CY"/>
    <property type="match status" value="1"/>
</dbReference>
<dbReference type="FunFam" id="3.10.450.10:FF:000004">
    <property type="entry name" value="Cystatin C"/>
    <property type="match status" value="1"/>
</dbReference>
<dbReference type="Gene3D" id="3.10.450.10">
    <property type="match status" value="1"/>
</dbReference>
<dbReference type="InterPro" id="IPR000010">
    <property type="entry name" value="Cystatin_dom"/>
</dbReference>
<dbReference type="InterPro" id="IPR046350">
    <property type="entry name" value="Cystatin_sf"/>
</dbReference>
<dbReference type="PANTHER" id="PTHR47033">
    <property type="entry name" value="CYSTATIN-M"/>
    <property type="match status" value="1"/>
</dbReference>
<dbReference type="PANTHER" id="PTHR47033:SF1">
    <property type="entry name" value="CYSTATIN-M"/>
    <property type="match status" value="1"/>
</dbReference>
<dbReference type="Pfam" id="PF00031">
    <property type="entry name" value="Cystatin"/>
    <property type="match status" value="1"/>
</dbReference>
<dbReference type="SMART" id="SM00043">
    <property type="entry name" value="CY"/>
    <property type="match status" value="1"/>
</dbReference>
<dbReference type="SUPFAM" id="SSF54403">
    <property type="entry name" value="Cystatin/monellin"/>
    <property type="match status" value="1"/>
</dbReference>
<comment type="function">
    <text evidence="3">Recombinant AsCystatin inhibits various C1 cysteine proteases including cathepsin L (Ki is 0.89 pM), papain (Ki is 1.74 pM) and cathepsin B (Ki is 0.69 nM). This activity has also been observed in the crude venom. This protein has no toxic activity and its function in the venom is unknown. It may play a role as a housekeeping or regulatory protein.</text>
</comment>
<comment type="subcellular location">
    <subcellularLocation>
        <location>Secreted</location>
    </subcellularLocation>
</comment>
<comment type="tissue specificity">
    <text evidence="5">Expressed at a low level by the venom gland (at protein level).</text>
</comment>
<comment type="miscellaneous">
    <text evidence="5">Negative results: the recombinant protein does not inhibit calpain-1 (CAPN1), a C2 family cysteine protease and legumain (LGMN), a C13 family cysteine protease. Does not provoke cell death (PC3 prostate cancer cells) following continuous exposure to 6 uM for 24 hours (PubMed:21172403).</text>
</comment>
<comment type="similarity">
    <text evidence="4">Belongs to the cystatin family.</text>
</comment>
<name>CYT_AUSSU</name>